<geneLocation type="mitochondrion"/>
<evidence type="ECO:0000250" key="1"/>
<evidence type="ECO:0000255" key="2"/>
<evidence type="ECO:0000269" key="3">
    <source>
    </source>
</evidence>
<evidence type="ECO:0000269" key="4">
    <source>
    </source>
</evidence>
<evidence type="ECO:0000269" key="5">
    <source>
    </source>
</evidence>
<evidence type="ECO:0000269" key="6">
    <source>
    </source>
</evidence>
<evidence type="ECO:0000305" key="7"/>
<evidence type="ECO:0000312" key="8">
    <source>
        <dbReference type="Araport" id="AT2G07741"/>
    </source>
</evidence>
<evidence type="ECO:0000312" key="9">
    <source>
        <dbReference type="Araport" id="ATMG00410"/>
    </source>
</evidence>
<reference key="1">
    <citation type="journal article" date="1996" name="DNA Res.">
        <title>Genomic recombination of the mitochondrial atp6 gene in Arabidopsis thaliana at the protein processing site creates two different presequences.</title>
        <authorList>
            <person name="Marienfeld J.R."/>
            <person name="Unseld M."/>
            <person name="Brandt P."/>
            <person name="Brennicke A."/>
        </authorList>
    </citation>
    <scope>NUCLEOTIDE SEQUENCE [GENOMIC DNA]</scope>
    <scope>RNA EDITING</scope>
    <source>
        <strain>cv. Columbia</strain>
    </source>
</reference>
<reference key="2">
    <citation type="journal article" date="1997" name="Nat. Genet.">
        <title>The mitochondrial genome of Arabidopsis thaliana contains 57 genes in 366,924 nucleotides.</title>
        <authorList>
            <person name="Unseld M."/>
            <person name="Marienfeld J.R."/>
            <person name="Brandt P."/>
            <person name="Brennicke A."/>
        </authorList>
    </citation>
    <scope>NUCLEOTIDE SEQUENCE [LARGE SCALE GENOMIC DNA]</scope>
    <source>
        <strain>cv. C24</strain>
    </source>
</reference>
<reference key="3">
    <citation type="journal article" date="1999" name="Proc. Natl. Acad. Sci. U.S.A.">
        <title>RNA editing in Arabidopsis mitochondria effects 441 C to U changes in ORFs.</title>
        <authorList>
            <person name="Giege P."/>
            <person name="Brennicke A."/>
        </authorList>
    </citation>
    <scope>NUCLEOTIDE SEQUENCE [GENOMIC DNA]</scope>
    <scope>RNA EDITING</scope>
</reference>
<reference key="4">
    <citation type="journal article" date="2011" name="BMC Biol.">
        <title>Double-strand break repair processes drive evolution of the mitochondrial genome in Arabidopsis.</title>
        <authorList>
            <person name="Davila J.I."/>
            <person name="Arrieta-Montiel M.P."/>
            <person name="Wamboldt Y."/>
            <person name="Cao J."/>
            <person name="Hagmann J."/>
            <person name="Shedge V."/>
            <person name="Xu Y.Z."/>
            <person name="Weigel D."/>
            <person name="Mackenzie S.A."/>
        </authorList>
    </citation>
    <scope>NUCLEOTIDE SEQUENCE [LARGE SCALE GENOMIC DNA]</scope>
    <source>
        <strain>cv. C24</strain>
        <strain>cv. Columbia</strain>
        <strain>cv. Landsberg erecta</strain>
    </source>
</reference>
<reference key="5">
    <citation type="journal article" date="1999" name="Nature">
        <title>Sequence and analysis of chromosome 2 of the plant Arabidopsis thaliana.</title>
        <authorList>
            <person name="Lin X."/>
            <person name="Kaul S."/>
            <person name="Rounsley S.D."/>
            <person name="Shea T.P."/>
            <person name="Benito M.-I."/>
            <person name="Town C.D."/>
            <person name="Fujii C.Y."/>
            <person name="Mason T.M."/>
            <person name="Bowman C.L."/>
            <person name="Barnstead M.E."/>
            <person name="Feldblyum T.V."/>
            <person name="Buell C.R."/>
            <person name="Ketchum K.A."/>
            <person name="Lee J.J."/>
            <person name="Ronning C.M."/>
            <person name="Koo H.L."/>
            <person name="Moffat K.S."/>
            <person name="Cronin L.A."/>
            <person name="Shen M."/>
            <person name="Pai G."/>
            <person name="Van Aken S."/>
            <person name="Umayam L."/>
            <person name="Tallon L.J."/>
            <person name="Gill J.E."/>
            <person name="Adams M.D."/>
            <person name="Carrera A.J."/>
            <person name="Creasy T.H."/>
            <person name="Goodman H.M."/>
            <person name="Somerville C.R."/>
            <person name="Copenhaver G.P."/>
            <person name="Preuss D."/>
            <person name="Nierman W.C."/>
            <person name="White O."/>
            <person name="Eisen J.A."/>
            <person name="Salzberg S.L."/>
            <person name="Fraser C.M."/>
            <person name="Venter J.C."/>
        </authorList>
    </citation>
    <scope>NUCLEOTIDE SEQUENCE [LARGE SCALE GENOMIC DNA] (AT2G07741)</scope>
    <source>
        <strain>cv. Columbia</strain>
    </source>
</reference>
<reference key="6">
    <citation type="journal article" date="2018" name="Plant Cell">
        <title>Correction of persistent errors in Arabidopsis reference mitochondrial genomes.</title>
        <authorList>
            <person name="Sloan D.B."/>
            <person name="Wu Z."/>
            <person name="Sharbrough J."/>
        </authorList>
    </citation>
    <scope>NUCLEOTIDE SEQUENCE [LARGE SCALE GENOMIC DNA]</scope>
    <scope>RNA EDITING</scope>
    <source>
        <strain>cv. Columbia</strain>
    </source>
</reference>
<reference key="7">
    <citation type="journal article" date="2017" name="Plant J.">
        <title>Araport11: a complete reannotation of the Arabidopsis thaliana reference genome.</title>
        <authorList>
            <person name="Cheng C.Y."/>
            <person name="Krishnakumar V."/>
            <person name="Chan A.P."/>
            <person name="Thibaud-Nissen F."/>
            <person name="Schobel S."/>
            <person name="Town C.D."/>
        </authorList>
    </citation>
    <scope>GENOME REANNOTATION (AT2G07741)</scope>
    <source>
        <strain>cv. Columbia</strain>
    </source>
</reference>
<reference key="8">
    <citation type="journal article" date="2008" name="Genetics">
        <title>Genetic architecture of mitochondrial editing in Arabidopsis thaliana.</title>
        <authorList>
            <person name="Bentolila S."/>
            <person name="Elliott L.E."/>
            <person name="Hanson M.R."/>
        </authorList>
    </citation>
    <scope>NUCLEOTIDE SEQUENCE [MRNA] OF 19-316</scope>
    <scope>RNA EDITING</scope>
    <source>
        <strain>cv. Columbia</strain>
        <strain>cv. Landsberg erecta</strain>
        <tissue>Rosette leaf</tissue>
    </source>
</reference>
<proteinExistence type="evidence at transcript level"/>
<keyword id="KW-0066">ATP synthesis</keyword>
<keyword id="KW-0138">CF(0)</keyword>
<keyword id="KW-0375">Hydrogen ion transport</keyword>
<keyword id="KW-0406">Ion transport</keyword>
<keyword id="KW-0472">Membrane</keyword>
<keyword id="KW-0496">Mitochondrion</keyword>
<keyword id="KW-0999">Mitochondrion inner membrane</keyword>
<keyword id="KW-1185">Reference proteome</keyword>
<keyword id="KW-0691">RNA editing</keyword>
<keyword id="KW-0812">Transmembrane</keyword>
<keyword id="KW-1133">Transmembrane helix</keyword>
<keyword id="KW-0813">Transport</keyword>
<gene>
    <name type="primary">ATP6-1</name>
    <name evidence="9" type="ordered locus">AtMg00410</name>
</gene>
<gene>
    <name evidence="8" type="ordered locus">At2g07741</name>
</gene>
<comment type="function">
    <text evidence="1">Mitochondrial membrane ATP synthase (F(1)F(0) ATP synthase or Complex V) produces ATP from ADP in the presence of a proton gradient across the membrane which is generated by electron transport complexes of the respiratory chain. F-type ATPases consist of two structural domains, F(1) - containing the extramembraneous catalytic core and F(0) - containing the membrane proton channel, linked together by a central stalk and a peripheral stalk. During catalysis, ATP synthesis in the catalytic domain of F(1) is coupled via a rotary mechanism of the central stalk subunits to proton translocation. Key component of the proton channel; it may play a direct role in the translocation of protons across the membrane (By similarity).</text>
</comment>
<comment type="subunit">
    <text>F-type ATPases have 2 components, CF(1) - the catalytic core - and CF(0) - the membrane proton channel. CF(1) has five subunits: alpha(3), beta(3), gamma(1), delta(1), epsilon(1). CF(0) has three main subunits: a, b and c.</text>
</comment>
<comment type="subcellular location">
    <subcellularLocation>
        <location>Mitochondrion inner membrane</location>
        <topology>Multi-pass membrane protein</topology>
    </subcellularLocation>
</comment>
<comment type="RNA editing">
    <location>
        <position position="159" evidence="3 4 5 6"/>
    </location>
</comment>
<comment type="miscellaneous">
    <text>The atp6 gene is located on the border of one of the mitochondrial DNA repeats resulting in two identical copies of the mature protein with different propeptide extensions.</text>
</comment>
<comment type="miscellaneous">
    <text>A stretch of 270 kb of the mitochondrial genome is duplicated within the centromere of chromosome 2 resulting in the duplication of the gene. The expression of this duplicated gene (At2g07741) is not demonstrated. It is also probably not RNA edited and therefore differs in all the positions known to be edited.</text>
</comment>
<comment type="similarity">
    <text evidence="7">Belongs to the ATPase A chain family.</text>
</comment>
<protein>
    <recommendedName>
        <fullName>ATP synthase subunit a-1</fullName>
    </recommendedName>
    <alternativeName>
        <fullName>F-ATPase protein 6</fullName>
    </alternativeName>
    <alternativeName>
        <fullName>P6-1</fullName>
    </alternativeName>
</protein>
<organism>
    <name type="scientific">Arabidopsis thaliana</name>
    <name type="common">Mouse-ear cress</name>
    <dbReference type="NCBI Taxonomy" id="3702"/>
    <lineage>
        <taxon>Eukaryota</taxon>
        <taxon>Viridiplantae</taxon>
        <taxon>Streptophyta</taxon>
        <taxon>Embryophyta</taxon>
        <taxon>Tracheophyta</taxon>
        <taxon>Spermatophyta</taxon>
        <taxon>Magnoliopsida</taxon>
        <taxon>eudicotyledons</taxon>
        <taxon>Gunneridae</taxon>
        <taxon>Pentapetalae</taxon>
        <taxon>rosids</taxon>
        <taxon>malvids</taxon>
        <taxon>Brassicales</taxon>
        <taxon>Brassicaceae</taxon>
        <taxon>Camelineae</taxon>
        <taxon>Arabidopsis</taxon>
    </lineage>
</organism>
<sequence>MRRIFLFDENSLNSSSTIDTSSASTIDTSFASQCTNFSSGQASGTQDTHAGIFEDCPGLNPNDERVVELQCEIREKCEALTQDPEMGLILGEALHAESDNVPFLQSIADDLTQNGVSGEAFQEALNIVGQAAASPLDQFEIVPLIPMHIGNFYFSFTNSSLFMLLTLSFFLLLIHFVTKKGGGNLVPNAWQSLVELLYDFVLNLVKEQIGGLSGNVKQMFFPCILVTFLFLLFCNLQGMIPYSFTVTSHFLITLALSFSIFIGITIVGFQRHGLHFFSFLLPAGVPLPLAPFLVLLELISYCFRALSLGIRLFANMMAGHSLVKILSGFAWTMLCMNDIFYFIGALGPLFIVLALTGLELGVAILQAYVFTILICIYLNDAINLH</sequence>
<accession>P93298</accession>
<accession>A0A178U7J2</accession>
<accession>A0A2P2CLG3</accession>
<accession>A7KNE5</accession>
<accession>F4INF7</accession>
<dbReference type="EMBL" id="Y08501">
    <property type="protein sequence ID" value="CAA69778.3"/>
    <property type="status" value="ALT_SEQ"/>
    <property type="molecule type" value="Genomic_DNA"/>
</dbReference>
<dbReference type="EMBL" id="JF729200">
    <property type="protein sequence ID" value="AEK01254.1"/>
    <property type="status" value="ALT_SEQ"/>
    <property type="molecule type" value="Genomic_DNA"/>
</dbReference>
<dbReference type="EMBL" id="JF729201">
    <property type="protein sequence ID" value="AEK01282.1"/>
    <property type="status" value="ALT_SEQ"/>
    <property type="molecule type" value="Genomic_DNA"/>
</dbReference>
<dbReference type="EMBL" id="JF729202">
    <property type="protein sequence ID" value="AEK01327.1"/>
    <property type="status" value="ALT_SEQ"/>
    <property type="molecule type" value="Genomic_DNA"/>
</dbReference>
<dbReference type="EMBL" id="BK010421">
    <property type="protein sequence ID" value="DAB41503.2"/>
    <property type="molecule type" value="Genomic_DNA"/>
</dbReference>
<dbReference type="EMBL" id="AC006225">
    <property type="protein sequence ID" value="AAM15167.1"/>
    <property type="status" value="ALT_SEQ"/>
    <property type="molecule type" value="Genomic_DNA"/>
</dbReference>
<dbReference type="EMBL" id="CP002685">
    <property type="protein sequence ID" value="AEC06126.1"/>
    <property type="status" value="ALT_SEQ"/>
    <property type="molecule type" value="Genomic_DNA"/>
</dbReference>
<dbReference type="EMBL" id="EF488888">
    <property type="protein sequence ID" value="ABS50600.1"/>
    <property type="molecule type" value="mRNA"/>
</dbReference>
<dbReference type="EMBL" id="EF488889">
    <property type="protein sequence ID" value="ABS50601.1"/>
    <property type="molecule type" value="mRNA"/>
</dbReference>
<dbReference type="RefSeq" id="NP_085503.1">
    <property type="nucleotide sequence ID" value="NC_001284.2"/>
</dbReference>
<dbReference type="RefSeq" id="NP_178810.1">
    <property type="nucleotide sequence ID" value="NM_126768.1"/>
</dbReference>
<dbReference type="SMR" id="P93298"/>
<dbReference type="FunCoup" id="P93298">
    <property type="interactions" value="34"/>
</dbReference>
<dbReference type="IntAct" id="P93298">
    <property type="interactions" value="1"/>
</dbReference>
<dbReference type="STRING" id="3702.A0A178U7J2"/>
<dbReference type="PaxDb" id="3702-AT2G07741.1"/>
<dbReference type="GeneID" id="815413"/>
<dbReference type="KEGG" id="ath:AT2G07741"/>
<dbReference type="Araport" id="AT2G07741"/>
<dbReference type="Araport" id="ATMG00410"/>
<dbReference type="TAIR" id="AT2G07741"/>
<dbReference type="TAIR" id="ATMG00410">
    <property type="gene designation" value="ATP6-1"/>
</dbReference>
<dbReference type="eggNOG" id="KOG4665">
    <property type="taxonomic scope" value="Eukaryota"/>
</dbReference>
<dbReference type="HOGENOM" id="CLU_041018_0_3_1"/>
<dbReference type="InParanoid" id="P93298"/>
<dbReference type="PhylomeDB" id="P93298"/>
<dbReference type="PRO" id="PR:P93298"/>
<dbReference type="Proteomes" id="UP000006548">
    <property type="component" value="Chromosome 2"/>
</dbReference>
<dbReference type="Proteomes" id="UP000006548">
    <property type="component" value="Mitochondrion MT"/>
</dbReference>
<dbReference type="ExpressionAtlas" id="P93298">
    <property type="expression patterns" value="baseline"/>
</dbReference>
<dbReference type="GO" id="GO:0005743">
    <property type="term" value="C:mitochondrial inner membrane"/>
    <property type="evidence" value="ECO:0007669"/>
    <property type="project" value="UniProtKB-SubCell"/>
</dbReference>
<dbReference type="GO" id="GO:0045259">
    <property type="term" value="C:proton-transporting ATP synthase complex"/>
    <property type="evidence" value="ECO:0000318"/>
    <property type="project" value="GO_Central"/>
</dbReference>
<dbReference type="GO" id="GO:0015078">
    <property type="term" value="F:proton transmembrane transporter activity"/>
    <property type="evidence" value="ECO:0007669"/>
    <property type="project" value="InterPro"/>
</dbReference>
<dbReference type="GO" id="GO:0015986">
    <property type="term" value="P:proton motive force-driven ATP synthesis"/>
    <property type="evidence" value="ECO:0000318"/>
    <property type="project" value="GO_Central"/>
</dbReference>
<dbReference type="CDD" id="cd00310">
    <property type="entry name" value="ATP-synt_Fo_a_6"/>
    <property type="match status" value="1"/>
</dbReference>
<dbReference type="FunFam" id="1.20.120.220:FF:000003">
    <property type="entry name" value="ATP synthase subunit a"/>
    <property type="match status" value="1"/>
</dbReference>
<dbReference type="Gene3D" id="1.20.120.220">
    <property type="entry name" value="ATP synthase, F0 complex, subunit A"/>
    <property type="match status" value="1"/>
</dbReference>
<dbReference type="HAMAP" id="MF_01393">
    <property type="entry name" value="ATP_synth_a_bact"/>
    <property type="match status" value="1"/>
</dbReference>
<dbReference type="InterPro" id="IPR000568">
    <property type="entry name" value="ATP_synth_F0_asu"/>
</dbReference>
<dbReference type="InterPro" id="IPR023011">
    <property type="entry name" value="ATP_synth_F0_asu_AS"/>
</dbReference>
<dbReference type="InterPro" id="IPR045083">
    <property type="entry name" value="ATP_synth_F0_asu_bact/mt"/>
</dbReference>
<dbReference type="InterPro" id="IPR035908">
    <property type="entry name" value="F0_ATP_A_sf"/>
</dbReference>
<dbReference type="NCBIfam" id="TIGR01131">
    <property type="entry name" value="ATP_synt_6_or_A"/>
    <property type="match status" value="1"/>
</dbReference>
<dbReference type="NCBIfam" id="NF004482">
    <property type="entry name" value="PRK05815.2-4"/>
    <property type="match status" value="1"/>
</dbReference>
<dbReference type="PANTHER" id="PTHR11410">
    <property type="entry name" value="ATP SYNTHASE SUBUNIT A"/>
    <property type="match status" value="1"/>
</dbReference>
<dbReference type="PANTHER" id="PTHR11410:SF0">
    <property type="entry name" value="ATP SYNTHASE SUBUNIT A"/>
    <property type="match status" value="1"/>
</dbReference>
<dbReference type="Pfam" id="PF00119">
    <property type="entry name" value="ATP-synt_A"/>
    <property type="match status" value="1"/>
</dbReference>
<dbReference type="PRINTS" id="PR00123">
    <property type="entry name" value="ATPASEA"/>
</dbReference>
<dbReference type="SUPFAM" id="SSF81336">
    <property type="entry name" value="F1F0 ATP synthase subunit A"/>
    <property type="match status" value="1"/>
</dbReference>
<dbReference type="PROSITE" id="PS00449">
    <property type="entry name" value="ATPASE_A"/>
    <property type="match status" value="1"/>
</dbReference>
<feature type="propeptide" id="PRO_0000002602">
    <location>
        <begin position="1"/>
        <end position="133"/>
    </location>
</feature>
<feature type="chain" id="PRO_0000002603" description="ATP synthase subunit a-1">
    <location>
        <begin position="134"/>
        <end position="385"/>
    </location>
</feature>
<feature type="transmembrane region" description="Helical" evidence="2">
    <location>
        <begin position="154"/>
        <end position="174"/>
    </location>
</feature>
<feature type="transmembrane region" description="Helical" evidence="2">
    <location>
        <begin position="220"/>
        <end position="240"/>
    </location>
</feature>
<feature type="transmembrane region" description="Helical" evidence="2">
    <location>
        <begin position="249"/>
        <end position="269"/>
    </location>
</feature>
<feature type="transmembrane region" description="Helical" evidence="2">
    <location>
        <begin position="276"/>
        <end position="296"/>
    </location>
</feature>
<feature type="transmembrane region" description="Helical" evidence="2">
    <location>
        <begin position="316"/>
        <end position="336"/>
    </location>
</feature>
<feature type="transmembrane region" description="Helical" evidence="2">
    <location>
        <begin position="339"/>
        <end position="359"/>
    </location>
</feature>
<feature type="transmembrane region" description="Helical" evidence="2">
    <location>
        <begin position="362"/>
        <end position="382"/>
    </location>
</feature>
<name>ATP61_ARATH</name>